<dbReference type="EC" id="3.13.2.1" evidence="1"/>
<dbReference type="EMBL" id="AE008923">
    <property type="protein sequence ID" value="AAM35692.1"/>
    <property type="molecule type" value="Genomic_DNA"/>
</dbReference>
<dbReference type="RefSeq" id="WP_005921033.1">
    <property type="nucleotide sequence ID" value="NC_003919.1"/>
</dbReference>
<dbReference type="SMR" id="Q8PP84"/>
<dbReference type="GeneID" id="66909996"/>
<dbReference type="KEGG" id="xac:XAC0804"/>
<dbReference type="eggNOG" id="COG0499">
    <property type="taxonomic scope" value="Bacteria"/>
</dbReference>
<dbReference type="HOGENOM" id="CLU_025194_2_1_6"/>
<dbReference type="UniPathway" id="UPA00314">
    <property type="reaction ID" value="UER00076"/>
</dbReference>
<dbReference type="Proteomes" id="UP000000576">
    <property type="component" value="Chromosome"/>
</dbReference>
<dbReference type="GO" id="GO:0005829">
    <property type="term" value="C:cytosol"/>
    <property type="evidence" value="ECO:0007669"/>
    <property type="project" value="TreeGrafter"/>
</dbReference>
<dbReference type="GO" id="GO:0004013">
    <property type="term" value="F:adenosylhomocysteinase activity"/>
    <property type="evidence" value="ECO:0007669"/>
    <property type="project" value="UniProtKB-UniRule"/>
</dbReference>
<dbReference type="GO" id="GO:0071269">
    <property type="term" value="P:L-homocysteine biosynthetic process"/>
    <property type="evidence" value="ECO:0007669"/>
    <property type="project" value="UniProtKB-UniRule"/>
</dbReference>
<dbReference type="GO" id="GO:0006730">
    <property type="term" value="P:one-carbon metabolic process"/>
    <property type="evidence" value="ECO:0007669"/>
    <property type="project" value="UniProtKB-KW"/>
</dbReference>
<dbReference type="GO" id="GO:0033353">
    <property type="term" value="P:S-adenosylmethionine cycle"/>
    <property type="evidence" value="ECO:0007669"/>
    <property type="project" value="TreeGrafter"/>
</dbReference>
<dbReference type="CDD" id="cd00401">
    <property type="entry name" value="SAHH"/>
    <property type="match status" value="1"/>
</dbReference>
<dbReference type="FunFam" id="3.40.50.720:FF:000004">
    <property type="entry name" value="Adenosylhomocysteinase"/>
    <property type="match status" value="1"/>
</dbReference>
<dbReference type="Gene3D" id="3.40.50.1480">
    <property type="entry name" value="Adenosylhomocysteinase-like"/>
    <property type="match status" value="1"/>
</dbReference>
<dbReference type="Gene3D" id="3.40.50.720">
    <property type="entry name" value="NAD(P)-binding Rossmann-like Domain"/>
    <property type="match status" value="1"/>
</dbReference>
<dbReference type="HAMAP" id="MF_00563">
    <property type="entry name" value="AdoHcyase"/>
    <property type="match status" value="1"/>
</dbReference>
<dbReference type="InterPro" id="IPR042172">
    <property type="entry name" value="Adenosylhomocyst_ase-like_sf"/>
</dbReference>
<dbReference type="InterPro" id="IPR000043">
    <property type="entry name" value="Adenosylhomocysteinase-like"/>
</dbReference>
<dbReference type="InterPro" id="IPR015878">
    <property type="entry name" value="Ado_hCys_hydrolase_NAD-bd"/>
</dbReference>
<dbReference type="InterPro" id="IPR036291">
    <property type="entry name" value="NAD(P)-bd_dom_sf"/>
</dbReference>
<dbReference type="InterPro" id="IPR020082">
    <property type="entry name" value="S-Ado-L-homoCys_hydrolase_CS"/>
</dbReference>
<dbReference type="NCBIfam" id="TIGR00936">
    <property type="entry name" value="ahcY"/>
    <property type="match status" value="1"/>
</dbReference>
<dbReference type="NCBIfam" id="NF004005">
    <property type="entry name" value="PRK05476.2-3"/>
    <property type="match status" value="1"/>
</dbReference>
<dbReference type="PANTHER" id="PTHR23420">
    <property type="entry name" value="ADENOSYLHOMOCYSTEINASE"/>
    <property type="match status" value="1"/>
</dbReference>
<dbReference type="PANTHER" id="PTHR23420:SF0">
    <property type="entry name" value="ADENOSYLHOMOCYSTEINASE"/>
    <property type="match status" value="1"/>
</dbReference>
<dbReference type="Pfam" id="PF05221">
    <property type="entry name" value="AdoHcyase"/>
    <property type="match status" value="1"/>
</dbReference>
<dbReference type="Pfam" id="PF00670">
    <property type="entry name" value="AdoHcyase_NAD"/>
    <property type="match status" value="1"/>
</dbReference>
<dbReference type="PIRSF" id="PIRSF001109">
    <property type="entry name" value="Ad_hcy_hydrolase"/>
    <property type="match status" value="1"/>
</dbReference>
<dbReference type="SMART" id="SM00996">
    <property type="entry name" value="AdoHcyase"/>
    <property type="match status" value="1"/>
</dbReference>
<dbReference type="SMART" id="SM00997">
    <property type="entry name" value="AdoHcyase_NAD"/>
    <property type="match status" value="1"/>
</dbReference>
<dbReference type="SUPFAM" id="SSF52283">
    <property type="entry name" value="Formate/glycerate dehydrogenase catalytic domain-like"/>
    <property type="match status" value="1"/>
</dbReference>
<dbReference type="SUPFAM" id="SSF51735">
    <property type="entry name" value="NAD(P)-binding Rossmann-fold domains"/>
    <property type="match status" value="1"/>
</dbReference>
<dbReference type="PROSITE" id="PS00738">
    <property type="entry name" value="ADOHCYASE_1"/>
    <property type="match status" value="1"/>
</dbReference>
<dbReference type="PROSITE" id="PS00739">
    <property type="entry name" value="ADOHCYASE_2"/>
    <property type="match status" value="1"/>
</dbReference>
<keyword id="KW-0963">Cytoplasm</keyword>
<keyword id="KW-0378">Hydrolase</keyword>
<keyword id="KW-0520">NAD</keyword>
<keyword id="KW-0554">One-carbon metabolism</keyword>
<accession>Q8PP84</accession>
<proteinExistence type="inferred from homology"/>
<organism>
    <name type="scientific">Xanthomonas axonopodis pv. citri (strain 306)</name>
    <dbReference type="NCBI Taxonomy" id="190486"/>
    <lineage>
        <taxon>Bacteria</taxon>
        <taxon>Pseudomonadati</taxon>
        <taxon>Pseudomonadota</taxon>
        <taxon>Gammaproteobacteria</taxon>
        <taxon>Lysobacterales</taxon>
        <taxon>Lysobacteraceae</taxon>
        <taxon>Xanthomonas</taxon>
    </lineage>
</organism>
<protein>
    <recommendedName>
        <fullName evidence="1">Adenosylhomocysteinase</fullName>
        <ecNumber evidence="1">3.13.2.1</ecNumber>
    </recommendedName>
    <alternativeName>
        <fullName evidence="1">S-adenosyl-L-homocysteine hydrolase</fullName>
        <shortName evidence="1">AdoHcyase</shortName>
    </alternativeName>
</protein>
<evidence type="ECO:0000255" key="1">
    <source>
        <dbReference type="HAMAP-Rule" id="MF_00563"/>
    </source>
</evidence>
<name>SAHH_XANAC</name>
<reference key="1">
    <citation type="journal article" date="2002" name="Nature">
        <title>Comparison of the genomes of two Xanthomonas pathogens with differing host specificities.</title>
        <authorList>
            <person name="da Silva A.C.R."/>
            <person name="Ferro J.A."/>
            <person name="Reinach F.C."/>
            <person name="Farah C.S."/>
            <person name="Furlan L.R."/>
            <person name="Quaggio R.B."/>
            <person name="Monteiro-Vitorello C.B."/>
            <person name="Van Sluys M.A."/>
            <person name="Almeida N.F. Jr."/>
            <person name="Alves L.M.C."/>
            <person name="do Amaral A.M."/>
            <person name="Bertolini M.C."/>
            <person name="Camargo L.E.A."/>
            <person name="Camarotte G."/>
            <person name="Cannavan F."/>
            <person name="Cardozo J."/>
            <person name="Chambergo F."/>
            <person name="Ciapina L.P."/>
            <person name="Cicarelli R.M.B."/>
            <person name="Coutinho L.L."/>
            <person name="Cursino-Santos J.R."/>
            <person name="El-Dorry H."/>
            <person name="Faria J.B."/>
            <person name="Ferreira A.J.S."/>
            <person name="Ferreira R.C.C."/>
            <person name="Ferro M.I.T."/>
            <person name="Formighieri E.F."/>
            <person name="Franco M.C."/>
            <person name="Greggio C.C."/>
            <person name="Gruber A."/>
            <person name="Katsuyama A.M."/>
            <person name="Kishi L.T."/>
            <person name="Leite R.P."/>
            <person name="Lemos E.G.M."/>
            <person name="Lemos M.V.F."/>
            <person name="Locali E.C."/>
            <person name="Machado M.A."/>
            <person name="Madeira A.M.B.N."/>
            <person name="Martinez-Rossi N.M."/>
            <person name="Martins E.C."/>
            <person name="Meidanis J."/>
            <person name="Menck C.F.M."/>
            <person name="Miyaki C.Y."/>
            <person name="Moon D.H."/>
            <person name="Moreira L.M."/>
            <person name="Novo M.T.M."/>
            <person name="Okura V.K."/>
            <person name="Oliveira M.C."/>
            <person name="Oliveira V.R."/>
            <person name="Pereira H.A."/>
            <person name="Rossi A."/>
            <person name="Sena J.A.D."/>
            <person name="Silva C."/>
            <person name="de Souza R.F."/>
            <person name="Spinola L.A.F."/>
            <person name="Takita M.A."/>
            <person name="Tamura R.E."/>
            <person name="Teixeira E.C."/>
            <person name="Tezza R.I.D."/>
            <person name="Trindade dos Santos M."/>
            <person name="Truffi D."/>
            <person name="Tsai S.M."/>
            <person name="White F.F."/>
            <person name="Setubal J.C."/>
            <person name="Kitajima J.P."/>
        </authorList>
    </citation>
    <scope>NUCLEOTIDE SEQUENCE [LARGE SCALE GENOMIC DNA]</scope>
    <source>
        <strain>306</strain>
    </source>
</reference>
<comment type="function">
    <text evidence="1">May play a key role in the regulation of the intracellular concentration of adenosylhomocysteine.</text>
</comment>
<comment type="catalytic activity">
    <reaction evidence="1">
        <text>S-adenosyl-L-homocysteine + H2O = L-homocysteine + adenosine</text>
        <dbReference type="Rhea" id="RHEA:21708"/>
        <dbReference type="ChEBI" id="CHEBI:15377"/>
        <dbReference type="ChEBI" id="CHEBI:16335"/>
        <dbReference type="ChEBI" id="CHEBI:57856"/>
        <dbReference type="ChEBI" id="CHEBI:58199"/>
        <dbReference type="EC" id="3.13.2.1"/>
    </reaction>
</comment>
<comment type="cofactor">
    <cofactor evidence="1">
        <name>NAD(+)</name>
        <dbReference type="ChEBI" id="CHEBI:57540"/>
    </cofactor>
    <text evidence="1">Binds 1 NAD(+) per subunit.</text>
</comment>
<comment type="pathway">
    <text evidence="1">Amino-acid biosynthesis; L-homocysteine biosynthesis; L-homocysteine from S-adenosyl-L-homocysteine: step 1/1.</text>
</comment>
<comment type="subcellular location">
    <subcellularLocation>
        <location evidence="1">Cytoplasm</location>
    </subcellularLocation>
</comment>
<comment type="similarity">
    <text evidence="1">Belongs to the adenosylhomocysteinase family.</text>
</comment>
<feature type="chain" id="PRO_0000116996" description="Adenosylhomocysteinase">
    <location>
        <begin position="1"/>
        <end position="480"/>
    </location>
</feature>
<feature type="binding site" evidence="1">
    <location>
        <position position="63"/>
    </location>
    <ligand>
        <name>substrate</name>
    </ligand>
</feature>
<feature type="binding site" evidence="1">
    <location>
        <position position="142"/>
    </location>
    <ligand>
        <name>substrate</name>
    </ligand>
</feature>
<feature type="binding site" evidence="1">
    <location>
        <position position="203"/>
    </location>
    <ligand>
        <name>substrate</name>
    </ligand>
</feature>
<feature type="binding site" evidence="1">
    <location>
        <begin position="204"/>
        <end position="206"/>
    </location>
    <ligand>
        <name>NAD(+)</name>
        <dbReference type="ChEBI" id="CHEBI:57540"/>
    </ligand>
</feature>
<feature type="binding site" evidence="1">
    <location>
        <position position="233"/>
    </location>
    <ligand>
        <name>substrate</name>
    </ligand>
</feature>
<feature type="binding site" evidence="1">
    <location>
        <position position="237"/>
    </location>
    <ligand>
        <name>substrate</name>
    </ligand>
</feature>
<feature type="binding site" evidence="1">
    <location>
        <position position="238"/>
    </location>
    <ligand>
        <name>NAD(+)</name>
        <dbReference type="ChEBI" id="CHEBI:57540"/>
    </ligand>
</feature>
<feature type="binding site" evidence="1">
    <location>
        <begin position="267"/>
        <end position="272"/>
    </location>
    <ligand>
        <name>NAD(+)</name>
        <dbReference type="ChEBI" id="CHEBI:57540"/>
    </ligand>
</feature>
<feature type="binding site" evidence="1">
    <location>
        <position position="290"/>
    </location>
    <ligand>
        <name>NAD(+)</name>
        <dbReference type="ChEBI" id="CHEBI:57540"/>
    </ligand>
</feature>
<feature type="binding site" evidence="1">
    <location>
        <position position="325"/>
    </location>
    <ligand>
        <name>NAD(+)</name>
        <dbReference type="ChEBI" id="CHEBI:57540"/>
    </ligand>
</feature>
<feature type="binding site" evidence="1">
    <location>
        <begin position="346"/>
        <end position="348"/>
    </location>
    <ligand>
        <name>NAD(+)</name>
        <dbReference type="ChEBI" id="CHEBI:57540"/>
    </ligand>
</feature>
<feature type="binding site" evidence="1">
    <location>
        <position position="394"/>
    </location>
    <ligand>
        <name>NAD(+)</name>
        <dbReference type="ChEBI" id="CHEBI:57540"/>
    </ligand>
</feature>
<sequence>MNAVTKITPHTDYKIADISLADWGRKELDIAEHEMPGLMSIRRKHAQTKPLKDVRITGSLHMTIQTAVLIETLKDIGADVRWASCNIFSTQDHAAAAIAATGTPVFAWKGETLEEYWDCTLDALTFTLPDGTLTGPELVVDDGGDVTLLIHKGYELENGSTWVDEPASSHEEGVIKALLKRVAVERPGYWGRVVKDWKGVSEETTTGVHRLYQIAEAGKLLIPAINVNDSVTKSKFDNLYGCRESLADGLKRAMDVMLAGKVAVVCGYGDVGKGSAASLRAYGARVIVTEIDPICALQASMEGFEVNTIESTLGRADIYVTTTGNKDIITVEHLQAMKDQAIVCNIGHFDNEIQVDALKALKDVQKINIKPQVDKYVFPNGNAIFLLADGRLVNLGCATGHPSFVMSNSFANQTLAQIDLWEKRDTYEKKVYILPKHLDEEVARLHLEKIGVKLTTLTKDQADYLGVDVAGPYKPDHYRY</sequence>
<gene>
    <name evidence="1" type="primary">ahcY</name>
    <name type="synonym">sahH</name>
    <name type="ordered locus">XAC0804</name>
</gene>